<dbReference type="EC" id="2.8.1.6" evidence="1"/>
<dbReference type="EMBL" id="AE000516">
    <property type="protein sequence ID" value="AAK45892.1"/>
    <property type="molecule type" value="Genomic_DNA"/>
</dbReference>
<dbReference type="PIR" id="G70542">
    <property type="entry name" value="G70542"/>
</dbReference>
<dbReference type="RefSeq" id="WP_003898934.1">
    <property type="nucleotide sequence ID" value="NZ_KK341227.1"/>
</dbReference>
<dbReference type="SMR" id="P9WPQ6"/>
<dbReference type="KEGG" id="mtc:MT1624"/>
<dbReference type="PATRIC" id="fig|83331.31.peg.1747"/>
<dbReference type="HOGENOM" id="CLU_033172_2_1_11"/>
<dbReference type="UniPathway" id="UPA00078">
    <property type="reaction ID" value="UER00162"/>
</dbReference>
<dbReference type="Proteomes" id="UP000001020">
    <property type="component" value="Chromosome"/>
</dbReference>
<dbReference type="GO" id="GO:0051537">
    <property type="term" value="F:2 iron, 2 sulfur cluster binding"/>
    <property type="evidence" value="ECO:0007669"/>
    <property type="project" value="UniProtKB-KW"/>
</dbReference>
<dbReference type="GO" id="GO:0051539">
    <property type="term" value="F:4 iron, 4 sulfur cluster binding"/>
    <property type="evidence" value="ECO:0007669"/>
    <property type="project" value="UniProtKB-KW"/>
</dbReference>
<dbReference type="GO" id="GO:0004076">
    <property type="term" value="F:biotin synthase activity"/>
    <property type="evidence" value="ECO:0007669"/>
    <property type="project" value="UniProtKB-UniRule"/>
</dbReference>
<dbReference type="GO" id="GO:0005506">
    <property type="term" value="F:iron ion binding"/>
    <property type="evidence" value="ECO:0007669"/>
    <property type="project" value="UniProtKB-UniRule"/>
</dbReference>
<dbReference type="GO" id="GO:0009102">
    <property type="term" value="P:biotin biosynthetic process"/>
    <property type="evidence" value="ECO:0007669"/>
    <property type="project" value="UniProtKB-UniRule"/>
</dbReference>
<dbReference type="CDD" id="cd01335">
    <property type="entry name" value="Radical_SAM"/>
    <property type="match status" value="1"/>
</dbReference>
<dbReference type="FunFam" id="3.20.20.70:FF:000026">
    <property type="entry name" value="Biotin synthase"/>
    <property type="match status" value="1"/>
</dbReference>
<dbReference type="Gene3D" id="3.20.20.70">
    <property type="entry name" value="Aldolase class I"/>
    <property type="match status" value="1"/>
</dbReference>
<dbReference type="HAMAP" id="MF_01694">
    <property type="entry name" value="BioB"/>
    <property type="match status" value="1"/>
</dbReference>
<dbReference type="InterPro" id="IPR013785">
    <property type="entry name" value="Aldolase_TIM"/>
</dbReference>
<dbReference type="InterPro" id="IPR010722">
    <property type="entry name" value="BATS_dom"/>
</dbReference>
<dbReference type="InterPro" id="IPR002684">
    <property type="entry name" value="Biotin_synth/BioAB"/>
</dbReference>
<dbReference type="InterPro" id="IPR024177">
    <property type="entry name" value="Biotin_synthase"/>
</dbReference>
<dbReference type="InterPro" id="IPR006638">
    <property type="entry name" value="Elp3/MiaA/NifB-like_rSAM"/>
</dbReference>
<dbReference type="InterPro" id="IPR007197">
    <property type="entry name" value="rSAM"/>
</dbReference>
<dbReference type="NCBIfam" id="TIGR00433">
    <property type="entry name" value="bioB"/>
    <property type="match status" value="1"/>
</dbReference>
<dbReference type="PANTHER" id="PTHR22976">
    <property type="entry name" value="BIOTIN SYNTHASE"/>
    <property type="match status" value="1"/>
</dbReference>
<dbReference type="PANTHER" id="PTHR22976:SF2">
    <property type="entry name" value="BIOTIN SYNTHASE, MITOCHONDRIAL"/>
    <property type="match status" value="1"/>
</dbReference>
<dbReference type="Pfam" id="PF06968">
    <property type="entry name" value="BATS"/>
    <property type="match status" value="1"/>
</dbReference>
<dbReference type="Pfam" id="PF04055">
    <property type="entry name" value="Radical_SAM"/>
    <property type="match status" value="1"/>
</dbReference>
<dbReference type="PIRSF" id="PIRSF001619">
    <property type="entry name" value="Biotin_synth"/>
    <property type="match status" value="1"/>
</dbReference>
<dbReference type="SFLD" id="SFLDG01060">
    <property type="entry name" value="BATS_domain_containing"/>
    <property type="match status" value="1"/>
</dbReference>
<dbReference type="SFLD" id="SFLDG01278">
    <property type="entry name" value="biotin_synthase_like"/>
    <property type="match status" value="1"/>
</dbReference>
<dbReference type="SMART" id="SM00876">
    <property type="entry name" value="BATS"/>
    <property type="match status" value="1"/>
</dbReference>
<dbReference type="SMART" id="SM00729">
    <property type="entry name" value="Elp3"/>
    <property type="match status" value="1"/>
</dbReference>
<dbReference type="SUPFAM" id="SSF102114">
    <property type="entry name" value="Radical SAM enzymes"/>
    <property type="match status" value="1"/>
</dbReference>
<dbReference type="PROSITE" id="PS51918">
    <property type="entry name" value="RADICAL_SAM"/>
    <property type="match status" value="1"/>
</dbReference>
<sequence length="349" mass="37550">MTQAATRPTNDAGQDGGNNSDILVVARQQVLQRGEGLNQDQVLAVLQLPDDRLEELLALAHEVRMRWCGPEVEVEGIISLKTGGCPEDCHFCSQSGLFASPVRSAWLDIPSLVEAAKQTAKSGATEFCIVAAVRGPDERLMAQVAAGIEAIRNEVEINIACSLGMLTAEQVDQLAARGVHRYNHNLETARSFFANVVTTHTWEERWQTLSMVRDAGMEVCCGGILGMGETLQQRAEFAAELAELGPDEVPLNFLNPRPGTPFADLEVMPVGDALKAVAAFRLALPRTMLRFAGGREITLGDLGAKRGILGGINAVIVGNYLTTLGRPAEADLELLDELQMPLKALNASL</sequence>
<evidence type="ECO:0000255" key="1">
    <source>
        <dbReference type="HAMAP-Rule" id="MF_01694"/>
    </source>
</evidence>
<evidence type="ECO:0000255" key="2">
    <source>
        <dbReference type="PROSITE-ProRule" id="PRU01266"/>
    </source>
</evidence>
<accession>P9WPQ6</accession>
<accession>L0TA21</accession>
<accession>O06601</accession>
<accession>P0A506</accession>
<feature type="chain" id="PRO_0000426910" description="Biotin synthase">
    <location>
        <begin position="1"/>
        <end position="349"/>
    </location>
</feature>
<feature type="domain" description="Radical SAM core" evidence="2">
    <location>
        <begin position="70"/>
        <end position="295"/>
    </location>
</feature>
<feature type="binding site" evidence="1">
    <location>
        <position position="85"/>
    </location>
    <ligand>
        <name>[4Fe-4S] cluster</name>
        <dbReference type="ChEBI" id="CHEBI:49883"/>
        <note>4Fe-4S-S-AdoMet</note>
    </ligand>
</feature>
<feature type="binding site" evidence="1">
    <location>
        <position position="89"/>
    </location>
    <ligand>
        <name>[4Fe-4S] cluster</name>
        <dbReference type="ChEBI" id="CHEBI:49883"/>
        <note>4Fe-4S-S-AdoMet</note>
    </ligand>
</feature>
<feature type="binding site" evidence="1">
    <location>
        <position position="92"/>
    </location>
    <ligand>
        <name>[4Fe-4S] cluster</name>
        <dbReference type="ChEBI" id="CHEBI:49883"/>
        <note>4Fe-4S-S-AdoMet</note>
    </ligand>
</feature>
<feature type="binding site" evidence="1">
    <location>
        <position position="128"/>
    </location>
    <ligand>
        <name>[2Fe-2S] cluster</name>
        <dbReference type="ChEBI" id="CHEBI:190135"/>
    </ligand>
</feature>
<feature type="binding site" evidence="1">
    <location>
        <position position="161"/>
    </location>
    <ligand>
        <name>[2Fe-2S] cluster</name>
        <dbReference type="ChEBI" id="CHEBI:190135"/>
    </ligand>
</feature>
<feature type="binding site" evidence="1">
    <location>
        <position position="220"/>
    </location>
    <ligand>
        <name>[2Fe-2S] cluster</name>
        <dbReference type="ChEBI" id="CHEBI:190135"/>
    </ligand>
</feature>
<feature type="binding site" evidence="1">
    <location>
        <position position="290"/>
    </location>
    <ligand>
        <name>[2Fe-2S] cluster</name>
        <dbReference type="ChEBI" id="CHEBI:190135"/>
    </ligand>
</feature>
<protein>
    <recommendedName>
        <fullName evidence="1">Biotin synthase</fullName>
        <ecNumber evidence="1">2.8.1.6</ecNumber>
    </recommendedName>
</protein>
<name>BIOB_MYCTO</name>
<reference key="1">
    <citation type="journal article" date="2002" name="J. Bacteriol.">
        <title>Whole-genome comparison of Mycobacterium tuberculosis clinical and laboratory strains.</title>
        <authorList>
            <person name="Fleischmann R.D."/>
            <person name="Alland D."/>
            <person name="Eisen J.A."/>
            <person name="Carpenter L."/>
            <person name="White O."/>
            <person name="Peterson J.D."/>
            <person name="DeBoy R.T."/>
            <person name="Dodson R.J."/>
            <person name="Gwinn M.L."/>
            <person name="Haft D.H."/>
            <person name="Hickey E.K."/>
            <person name="Kolonay J.F."/>
            <person name="Nelson W.C."/>
            <person name="Umayam L.A."/>
            <person name="Ermolaeva M.D."/>
            <person name="Salzberg S.L."/>
            <person name="Delcher A."/>
            <person name="Utterback T.R."/>
            <person name="Weidman J.F."/>
            <person name="Khouri H.M."/>
            <person name="Gill J."/>
            <person name="Mikula A."/>
            <person name="Bishai W."/>
            <person name="Jacobs W.R. Jr."/>
            <person name="Venter J.C."/>
            <person name="Fraser C.M."/>
        </authorList>
    </citation>
    <scope>NUCLEOTIDE SEQUENCE [LARGE SCALE GENOMIC DNA]</scope>
    <source>
        <strain>CDC 1551 / Oshkosh</strain>
    </source>
</reference>
<proteinExistence type="inferred from homology"/>
<keyword id="KW-0001">2Fe-2S</keyword>
<keyword id="KW-0004">4Fe-4S</keyword>
<keyword id="KW-0093">Biotin biosynthesis</keyword>
<keyword id="KW-0408">Iron</keyword>
<keyword id="KW-0411">Iron-sulfur</keyword>
<keyword id="KW-0479">Metal-binding</keyword>
<keyword id="KW-1185">Reference proteome</keyword>
<keyword id="KW-0949">S-adenosyl-L-methionine</keyword>
<keyword id="KW-0808">Transferase</keyword>
<comment type="function">
    <text evidence="1">Catalyzes the conversion of dethiobiotin (DTB) to biotin by the insertion of a sulfur atom into dethiobiotin via a radical-based mechanism.</text>
</comment>
<comment type="catalytic activity">
    <reaction evidence="1">
        <text>(4R,5S)-dethiobiotin + (sulfur carrier)-SH + 2 reduced [2Fe-2S]-[ferredoxin] + 2 S-adenosyl-L-methionine = (sulfur carrier)-H + biotin + 2 5'-deoxyadenosine + 2 L-methionine + 2 oxidized [2Fe-2S]-[ferredoxin]</text>
        <dbReference type="Rhea" id="RHEA:22060"/>
        <dbReference type="Rhea" id="RHEA-COMP:10000"/>
        <dbReference type="Rhea" id="RHEA-COMP:10001"/>
        <dbReference type="Rhea" id="RHEA-COMP:14737"/>
        <dbReference type="Rhea" id="RHEA-COMP:14739"/>
        <dbReference type="ChEBI" id="CHEBI:17319"/>
        <dbReference type="ChEBI" id="CHEBI:29917"/>
        <dbReference type="ChEBI" id="CHEBI:33737"/>
        <dbReference type="ChEBI" id="CHEBI:33738"/>
        <dbReference type="ChEBI" id="CHEBI:57586"/>
        <dbReference type="ChEBI" id="CHEBI:57844"/>
        <dbReference type="ChEBI" id="CHEBI:59789"/>
        <dbReference type="ChEBI" id="CHEBI:64428"/>
        <dbReference type="ChEBI" id="CHEBI:149473"/>
        <dbReference type="EC" id="2.8.1.6"/>
    </reaction>
</comment>
<comment type="cofactor">
    <cofactor evidence="1">
        <name>[4Fe-4S] cluster</name>
        <dbReference type="ChEBI" id="CHEBI:49883"/>
    </cofactor>
    <text evidence="1">Binds 1 [4Fe-4S] cluster. The cluster is coordinated with 3 cysteines and an exchangeable S-adenosyl-L-methionine.</text>
</comment>
<comment type="cofactor">
    <cofactor evidence="1">
        <name>[2Fe-2S] cluster</name>
        <dbReference type="ChEBI" id="CHEBI:190135"/>
    </cofactor>
    <text evidence="1">Binds 1 [2Fe-2S] cluster. The cluster is coordinated with 3 cysteines and 1 arginine.</text>
</comment>
<comment type="pathway">
    <text evidence="1">Cofactor biosynthesis; biotin biosynthesis; biotin from 7,8-diaminononanoate: step 2/2.</text>
</comment>
<comment type="subunit">
    <text evidence="1">Homodimer.</text>
</comment>
<comment type="similarity">
    <text evidence="1">Belongs to the radical SAM superfamily. Biotin synthase family.</text>
</comment>
<gene>
    <name evidence="1" type="primary">bioB</name>
    <name type="ordered locus">MT1624</name>
</gene>
<organism>
    <name type="scientific">Mycobacterium tuberculosis (strain CDC 1551 / Oshkosh)</name>
    <dbReference type="NCBI Taxonomy" id="83331"/>
    <lineage>
        <taxon>Bacteria</taxon>
        <taxon>Bacillati</taxon>
        <taxon>Actinomycetota</taxon>
        <taxon>Actinomycetes</taxon>
        <taxon>Mycobacteriales</taxon>
        <taxon>Mycobacteriaceae</taxon>
        <taxon>Mycobacterium</taxon>
        <taxon>Mycobacterium tuberculosis complex</taxon>
    </lineage>
</organism>